<name>APAH_SHESM</name>
<evidence type="ECO:0000255" key="1">
    <source>
        <dbReference type="HAMAP-Rule" id="MF_00199"/>
    </source>
</evidence>
<keyword id="KW-0378">Hydrolase</keyword>
<accession>Q0HLT4</accession>
<protein>
    <recommendedName>
        <fullName evidence="1">Bis(5'-nucleosyl)-tetraphosphatase, symmetrical</fullName>
        <ecNumber evidence="1">3.6.1.41</ecNumber>
    </recommendedName>
    <alternativeName>
        <fullName evidence="1">Ap4A hydrolase</fullName>
    </alternativeName>
    <alternativeName>
        <fullName evidence="1">Diadenosine 5',5'''-P1,P4-tetraphosphate pyrophosphohydrolase</fullName>
    </alternativeName>
    <alternativeName>
        <fullName evidence="1">Diadenosine tetraphosphatase</fullName>
    </alternativeName>
</protein>
<sequence length="274" mass="31234">MAHYFVGDVQGCFAELKRLLAEVDFNPSRDELWAVGDLVARGPDSLATLRYFQSLGDAGKTVLGNHDLHLLALHGKLKRDKPSDNLAPLLNAPDIASLIYWLRQQPLMRELPEHKVIMTHAGVPPQWSLDVLRQESQLVSQALKQGDYLDALISQMYSDTAERWDPSAIGLNRLRFCINALTRMRYLYVDGHLDFDCKQPPEDCNNPQLRPWFEFTSALRQSHTLVFGHWAALMGKVNDPKLKALDTGCCWGEYLTLWHLEKDQKITQKKLKKG</sequence>
<proteinExistence type="inferred from homology"/>
<gene>
    <name evidence="1" type="primary">apaH</name>
    <name type="ordered locus">Shewmr4_0903</name>
</gene>
<dbReference type="EC" id="3.6.1.41" evidence="1"/>
<dbReference type="EMBL" id="CP000446">
    <property type="protein sequence ID" value="ABI37983.1"/>
    <property type="molecule type" value="Genomic_DNA"/>
</dbReference>
<dbReference type="RefSeq" id="WP_011621698.1">
    <property type="nucleotide sequence ID" value="NC_008321.1"/>
</dbReference>
<dbReference type="SMR" id="Q0HLT4"/>
<dbReference type="KEGG" id="she:Shewmr4_0903"/>
<dbReference type="HOGENOM" id="CLU_056184_2_0_6"/>
<dbReference type="GO" id="GO:0005737">
    <property type="term" value="C:cytoplasm"/>
    <property type="evidence" value="ECO:0007669"/>
    <property type="project" value="TreeGrafter"/>
</dbReference>
<dbReference type="GO" id="GO:0008803">
    <property type="term" value="F:bis(5'-nucleosyl)-tetraphosphatase (symmetrical) activity"/>
    <property type="evidence" value="ECO:0007669"/>
    <property type="project" value="UniProtKB-UniRule"/>
</dbReference>
<dbReference type="GO" id="GO:0016791">
    <property type="term" value="F:phosphatase activity"/>
    <property type="evidence" value="ECO:0007669"/>
    <property type="project" value="TreeGrafter"/>
</dbReference>
<dbReference type="GO" id="GO:0110154">
    <property type="term" value="P:RNA decapping"/>
    <property type="evidence" value="ECO:0007669"/>
    <property type="project" value="TreeGrafter"/>
</dbReference>
<dbReference type="CDD" id="cd07422">
    <property type="entry name" value="MPP_ApaH"/>
    <property type="match status" value="1"/>
</dbReference>
<dbReference type="Gene3D" id="3.60.21.10">
    <property type="match status" value="1"/>
</dbReference>
<dbReference type="HAMAP" id="MF_00199">
    <property type="entry name" value="ApaH"/>
    <property type="match status" value="1"/>
</dbReference>
<dbReference type="InterPro" id="IPR050126">
    <property type="entry name" value="Ap4A_hydrolase"/>
</dbReference>
<dbReference type="InterPro" id="IPR004617">
    <property type="entry name" value="ApaH"/>
</dbReference>
<dbReference type="InterPro" id="IPR004843">
    <property type="entry name" value="Calcineurin-like_PHP_ApaH"/>
</dbReference>
<dbReference type="InterPro" id="IPR029052">
    <property type="entry name" value="Metallo-depent_PP-like"/>
</dbReference>
<dbReference type="NCBIfam" id="TIGR00668">
    <property type="entry name" value="apaH"/>
    <property type="match status" value="1"/>
</dbReference>
<dbReference type="NCBIfam" id="NF001204">
    <property type="entry name" value="PRK00166.1"/>
    <property type="match status" value="1"/>
</dbReference>
<dbReference type="PANTHER" id="PTHR42850:SF11">
    <property type="entry name" value="BIS(5'-NUCLEOSYL)-TETRAPHOSPHATASE [SYMMETRICAL]"/>
    <property type="match status" value="1"/>
</dbReference>
<dbReference type="PANTHER" id="PTHR42850">
    <property type="entry name" value="METALLOPHOSPHOESTERASE"/>
    <property type="match status" value="1"/>
</dbReference>
<dbReference type="Pfam" id="PF00149">
    <property type="entry name" value="Metallophos"/>
    <property type="match status" value="1"/>
</dbReference>
<dbReference type="PIRSF" id="PIRSF000903">
    <property type="entry name" value="B5n-ttraPtase_sm"/>
    <property type="match status" value="1"/>
</dbReference>
<dbReference type="SUPFAM" id="SSF56300">
    <property type="entry name" value="Metallo-dependent phosphatases"/>
    <property type="match status" value="1"/>
</dbReference>
<reference key="1">
    <citation type="submission" date="2006-08" db="EMBL/GenBank/DDBJ databases">
        <title>Complete sequence of Shewanella sp. MR-4.</title>
        <authorList>
            <consortium name="US DOE Joint Genome Institute"/>
            <person name="Copeland A."/>
            <person name="Lucas S."/>
            <person name="Lapidus A."/>
            <person name="Barry K."/>
            <person name="Detter J.C."/>
            <person name="Glavina del Rio T."/>
            <person name="Hammon N."/>
            <person name="Israni S."/>
            <person name="Dalin E."/>
            <person name="Tice H."/>
            <person name="Pitluck S."/>
            <person name="Kiss H."/>
            <person name="Brettin T."/>
            <person name="Bruce D."/>
            <person name="Han C."/>
            <person name="Tapia R."/>
            <person name="Gilna P."/>
            <person name="Schmutz J."/>
            <person name="Larimer F."/>
            <person name="Land M."/>
            <person name="Hauser L."/>
            <person name="Kyrpides N."/>
            <person name="Mikhailova N."/>
            <person name="Nealson K."/>
            <person name="Konstantinidis K."/>
            <person name="Klappenbach J."/>
            <person name="Tiedje J."/>
            <person name="Richardson P."/>
        </authorList>
    </citation>
    <scope>NUCLEOTIDE SEQUENCE [LARGE SCALE GENOMIC DNA]</scope>
    <source>
        <strain>MR-4</strain>
    </source>
</reference>
<feature type="chain" id="PRO_1000012094" description="Bis(5'-nucleosyl)-tetraphosphatase, symmetrical">
    <location>
        <begin position="1"/>
        <end position="274"/>
    </location>
</feature>
<comment type="function">
    <text evidence="1">Hydrolyzes diadenosine 5',5'''-P1,P4-tetraphosphate to yield ADP.</text>
</comment>
<comment type="catalytic activity">
    <reaction evidence="1">
        <text>P(1),P(4)-bis(5'-adenosyl) tetraphosphate + H2O = 2 ADP + 2 H(+)</text>
        <dbReference type="Rhea" id="RHEA:24252"/>
        <dbReference type="ChEBI" id="CHEBI:15377"/>
        <dbReference type="ChEBI" id="CHEBI:15378"/>
        <dbReference type="ChEBI" id="CHEBI:58141"/>
        <dbReference type="ChEBI" id="CHEBI:456216"/>
        <dbReference type="EC" id="3.6.1.41"/>
    </reaction>
</comment>
<comment type="similarity">
    <text evidence="1">Belongs to the Ap4A hydrolase family.</text>
</comment>
<organism>
    <name type="scientific">Shewanella sp. (strain MR-4)</name>
    <dbReference type="NCBI Taxonomy" id="60480"/>
    <lineage>
        <taxon>Bacteria</taxon>
        <taxon>Pseudomonadati</taxon>
        <taxon>Pseudomonadota</taxon>
        <taxon>Gammaproteobacteria</taxon>
        <taxon>Alteromonadales</taxon>
        <taxon>Shewanellaceae</taxon>
        <taxon>Shewanella</taxon>
    </lineage>
</organism>